<sequence length="163" mass="18002">MDWILPIAGIIAAIAFLILCIGIVAVLNSVKKNLDYVAKTLDGVEGQVQGITRETTDLLHKVNRLTEDIQGKVDRLNSVVDAVKGIGDSVQTLNSSVDRVTNSITHNISQNEDKISQVVQWSNVAMEIADKWQNRHYRRGSANYKANNVATDANHSYTSRVDK</sequence>
<reference key="1">
    <citation type="journal article" date="2005" name="J. Bacteriol.">
        <title>Insights on evolution of virulence and resistance from the complete genome analysis of an early methicillin-resistant Staphylococcus aureus strain and a biofilm-producing methicillin-resistant Staphylococcus epidermidis strain.</title>
        <authorList>
            <person name="Gill S.R."/>
            <person name="Fouts D.E."/>
            <person name="Archer G.L."/>
            <person name="Mongodin E.F."/>
            <person name="DeBoy R.T."/>
            <person name="Ravel J."/>
            <person name="Paulsen I.T."/>
            <person name="Kolonay J.F."/>
            <person name="Brinkac L.M."/>
            <person name="Beanan M.J."/>
            <person name="Dodson R.J."/>
            <person name="Daugherty S.C."/>
            <person name="Madupu R."/>
            <person name="Angiuoli S.V."/>
            <person name="Durkin A.S."/>
            <person name="Haft D.H."/>
            <person name="Vamathevan J.J."/>
            <person name="Khouri H."/>
            <person name="Utterback T.R."/>
            <person name="Lee C."/>
            <person name="Dimitrov G."/>
            <person name="Jiang L."/>
            <person name="Qin H."/>
            <person name="Weidman J."/>
            <person name="Tran K."/>
            <person name="Kang K.H."/>
            <person name="Hance I.R."/>
            <person name="Nelson K.E."/>
            <person name="Fraser C.M."/>
        </authorList>
    </citation>
    <scope>NUCLEOTIDE SEQUENCE [LARGE SCALE GENOMIC DNA]</scope>
    <source>
        <strain>COL</strain>
    </source>
</reference>
<feature type="chain" id="PRO_0000299435" description="UPF0478 protein SACOL1789">
    <location>
        <begin position="1"/>
        <end position="163"/>
    </location>
</feature>
<feature type="transmembrane region" description="Helical" evidence="1">
    <location>
        <begin position="7"/>
        <end position="27"/>
    </location>
</feature>
<dbReference type="EMBL" id="CP000046">
    <property type="protein sequence ID" value="AAW38317.1"/>
    <property type="molecule type" value="Genomic_DNA"/>
</dbReference>
<dbReference type="RefSeq" id="WP_000383814.1">
    <property type="nucleotide sequence ID" value="NZ_JBGOFO010000008.1"/>
</dbReference>
<dbReference type="SMR" id="Q5HF35"/>
<dbReference type="KEGG" id="sac:SACOL1789"/>
<dbReference type="HOGENOM" id="CLU_115870_0_0_9"/>
<dbReference type="Proteomes" id="UP000000530">
    <property type="component" value="Chromosome"/>
</dbReference>
<dbReference type="GO" id="GO:0005886">
    <property type="term" value="C:plasma membrane"/>
    <property type="evidence" value="ECO:0007669"/>
    <property type="project" value="UniProtKB-SubCell"/>
</dbReference>
<dbReference type="Gene3D" id="1.10.287.950">
    <property type="entry name" value="Methyl-accepting chemotaxis protein"/>
    <property type="match status" value="1"/>
</dbReference>
<dbReference type="InterPro" id="IPR009293">
    <property type="entry name" value="UPF0478"/>
</dbReference>
<dbReference type="PANTHER" id="PTHR40070">
    <property type="entry name" value="UPF0478 PROTEIN YTXG"/>
    <property type="match status" value="1"/>
</dbReference>
<dbReference type="PANTHER" id="PTHR40070:SF1">
    <property type="entry name" value="UPF0478 PROTEIN YTXG"/>
    <property type="match status" value="1"/>
</dbReference>
<dbReference type="Pfam" id="PF06103">
    <property type="entry name" value="DUF948"/>
    <property type="match status" value="1"/>
</dbReference>
<dbReference type="SUPFAM" id="SSF58104">
    <property type="entry name" value="Methyl-accepting chemotaxis protein (MCP) signaling domain"/>
    <property type="match status" value="1"/>
</dbReference>
<gene>
    <name type="ordered locus">SACOL1789</name>
</gene>
<comment type="subcellular location">
    <subcellularLocation>
        <location evidence="2">Cell membrane</location>
        <topology evidence="2">Single-pass membrane protein</topology>
    </subcellularLocation>
</comment>
<comment type="similarity">
    <text evidence="2">Belongs to the UPF0478 family.</text>
</comment>
<organism>
    <name type="scientific">Staphylococcus aureus (strain COL)</name>
    <dbReference type="NCBI Taxonomy" id="93062"/>
    <lineage>
        <taxon>Bacteria</taxon>
        <taxon>Bacillati</taxon>
        <taxon>Bacillota</taxon>
        <taxon>Bacilli</taxon>
        <taxon>Bacillales</taxon>
        <taxon>Staphylococcaceae</taxon>
        <taxon>Staphylococcus</taxon>
    </lineage>
</organism>
<protein>
    <recommendedName>
        <fullName>UPF0478 protein SACOL1789</fullName>
    </recommendedName>
</protein>
<evidence type="ECO:0000255" key="1"/>
<evidence type="ECO:0000305" key="2"/>
<name>Y1789_STAAC</name>
<keyword id="KW-1003">Cell membrane</keyword>
<keyword id="KW-0472">Membrane</keyword>
<keyword id="KW-0812">Transmembrane</keyword>
<keyword id="KW-1133">Transmembrane helix</keyword>
<proteinExistence type="inferred from homology"/>
<accession>Q5HF35</accession>